<sequence>MSSSSSHFSSTAADLLAVFSSDNKDKSANKRISALKKAIAGISYGYDMSSLFPSVISSMESNNLELKKLCYLYLKIYASVKPTEAKRAVKLILNDIYSSNPMIRSLALRTLTSVNIKNFWVAAMDPIVRLLDDTDPYVRKTAAIGIAKLYSYDKKMVESSGLIDHLKEMLSDESSVVVANSLAALMNIVNSSTGFKLTFSREISNKLVKSLTDCSEWLQVAILDALIFYVPQKPGEAESFAERISPWLQHGNAAVCMGAVKVILYLTNYMKDDNRVKEYFMKTQPPLVTLLARKSSATQYVILRNIQIILEQCPEMFANDIHFFYCNFDDPIYVKLEKLDILTKIADIHNLDQILPEFVEYASEIDVELVRKSVKCIGYLAIKIEERKNDCIDSLIELMNTKVTYVIQEAVIVIRDILRKYPGSYKSLVPILYENLDSLDEPDAKSAVIWILGQYAEEIEDSITLLNDYLKGFFDEPLEIQLTLLTAVIKVFLKKPTAAADMVTNVLQWCTDEVNDPDLRDRGIIYSRMLSANPELAKKVILANMPPVNVGTGMYDPDTTEQLMLNISTLSSIYHKPPNRFVKGAQVAYCEPSPVLRLRTRDSNPSNTDSRESNHKKYNHFHQKSQTRRVMEQYDRNSWNPSPFSDESNSNTFSGKFDSADQENLGMPMTPETHLMD</sequence>
<organism>
    <name type="scientific">Schizosaccharomyces pombe (strain 972 / ATCC 24843)</name>
    <name type="common">Fission yeast</name>
    <dbReference type="NCBI Taxonomy" id="284812"/>
    <lineage>
        <taxon>Eukaryota</taxon>
        <taxon>Fungi</taxon>
        <taxon>Dikarya</taxon>
        <taxon>Ascomycota</taxon>
        <taxon>Taphrinomycotina</taxon>
        <taxon>Schizosaccharomycetes</taxon>
        <taxon>Schizosaccharomycetales</taxon>
        <taxon>Schizosaccharomycetaceae</taxon>
        <taxon>Schizosaccharomyces</taxon>
    </lineage>
</organism>
<feature type="chain" id="PRO_0000193754" description="AP-2 complex subunit beta">
    <location>
        <begin position="1"/>
        <end position="677"/>
    </location>
</feature>
<feature type="region of interest" description="Disordered" evidence="2">
    <location>
        <begin position="597"/>
        <end position="677"/>
    </location>
</feature>
<feature type="compositionally biased region" description="Basic residues" evidence="2">
    <location>
        <begin position="616"/>
        <end position="627"/>
    </location>
</feature>
<feature type="compositionally biased region" description="Polar residues" evidence="2">
    <location>
        <begin position="636"/>
        <end position="654"/>
    </location>
</feature>
<name>AP2B_SCHPO</name>
<proteinExistence type="inferred from homology"/>
<comment type="function">
    <text evidence="1">Adaptins are components of the adaptor complexes which link clathrin to receptors in coated vesicles. Clathrin-associated protein complexes are believed to interact with the cytoplasmic tails of membrane proteins, leading to their selection and concentration. Beta adaptin is a subunit of the plasma membrane adaptor (By similarity).</text>
</comment>
<comment type="subunit">
    <text evidence="1">Adaptor protein complex 2 (AP-2) is a heterotetramer composed of two large adaptins (alpha-type subunit apl3 and beta-type subunit apl1), a medium chain (mu-type subunit apm4) and a small adaptin (sigma-type subunit aps2).</text>
</comment>
<comment type="subcellular location">
    <subcellularLocation>
        <location evidence="1">Cell membrane</location>
    </subcellularLocation>
    <subcellularLocation>
        <location evidence="1">Membrane</location>
        <location evidence="1">Coated pit</location>
        <topology evidence="1">Peripheral membrane protein</topology>
        <orientation evidence="1">Cytoplasmic side</orientation>
    </subcellularLocation>
    <text evidence="1">Component of the coat surrounding the cytoplasmic face of coated vesicles in the plasma membrane.</text>
</comment>
<comment type="similarity">
    <text evidence="3">Belongs to the adaptor complexes large subunit family.</text>
</comment>
<dbReference type="EMBL" id="CU329671">
    <property type="protein sequence ID" value="CAA17886.1"/>
    <property type="molecule type" value="Genomic_DNA"/>
</dbReference>
<dbReference type="PIR" id="T40145">
    <property type="entry name" value="T40145"/>
</dbReference>
<dbReference type="RefSeq" id="NP_596435.1">
    <property type="nucleotide sequence ID" value="NM_001022354.2"/>
</dbReference>
<dbReference type="SMR" id="O43005"/>
<dbReference type="BioGRID" id="276904">
    <property type="interactions" value="7"/>
</dbReference>
<dbReference type="FunCoup" id="O43005">
    <property type="interactions" value="19"/>
</dbReference>
<dbReference type="STRING" id="284812.O43005"/>
<dbReference type="iPTMnet" id="O43005"/>
<dbReference type="PaxDb" id="4896-SPBC2G2.06c.1"/>
<dbReference type="EnsemblFungi" id="SPBC2G2.06c.1">
    <property type="protein sequence ID" value="SPBC2G2.06c.1:pep"/>
    <property type="gene ID" value="SPBC2G2.06c"/>
</dbReference>
<dbReference type="GeneID" id="2540375"/>
<dbReference type="KEGG" id="spo:2540375"/>
<dbReference type="PomBase" id="SPBC2G2.06c">
    <property type="gene designation" value="apl1"/>
</dbReference>
<dbReference type="VEuPathDB" id="FungiDB:SPBC2G2.06c"/>
<dbReference type="eggNOG" id="KOG1061">
    <property type="taxonomic scope" value="Eukaryota"/>
</dbReference>
<dbReference type="HOGENOM" id="CLU_006320_4_4_1"/>
<dbReference type="InParanoid" id="O43005"/>
<dbReference type="OMA" id="FIQRPTR"/>
<dbReference type="PhylomeDB" id="O43005"/>
<dbReference type="Reactome" id="R-SPO-437239">
    <property type="pathway name" value="Recycling pathway of L1"/>
</dbReference>
<dbReference type="Reactome" id="R-SPO-8856825">
    <property type="pathway name" value="Cargo recognition for clathrin-mediated endocytosis"/>
</dbReference>
<dbReference type="Reactome" id="R-SPO-8856828">
    <property type="pathway name" value="Clathrin-mediated endocytosis"/>
</dbReference>
<dbReference type="Reactome" id="R-SPO-8866427">
    <property type="pathway name" value="VLDLR internalisation and degradation"/>
</dbReference>
<dbReference type="Reactome" id="R-SPO-8964038">
    <property type="pathway name" value="LDL clearance"/>
</dbReference>
<dbReference type="PRO" id="PR:O43005"/>
<dbReference type="Proteomes" id="UP000002485">
    <property type="component" value="Chromosome II"/>
</dbReference>
<dbReference type="GO" id="GO:0030122">
    <property type="term" value="C:AP-2 adaptor complex"/>
    <property type="evidence" value="ECO:0000266"/>
    <property type="project" value="PomBase"/>
</dbReference>
<dbReference type="GO" id="GO:0051285">
    <property type="term" value="C:cell cortex of cell tip"/>
    <property type="evidence" value="ECO:0000314"/>
    <property type="project" value="PomBase"/>
</dbReference>
<dbReference type="GO" id="GO:0032153">
    <property type="term" value="C:cell division site"/>
    <property type="evidence" value="ECO:0000314"/>
    <property type="project" value="PomBase"/>
</dbReference>
<dbReference type="GO" id="GO:0005829">
    <property type="term" value="C:cytosol"/>
    <property type="evidence" value="ECO:0007005"/>
    <property type="project" value="PomBase"/>
</dbReference>
<dbReference type="GO" id="GO:0044732">
    <property type="term" value="C:mitotic spindle pole body"/>
    <property type="evidence" value="ECO:0007005"/>
    <property type="project" value="PomBase"/>
</dbReference>
<dbReference type="GO" id="GO:0005634">
    <property type="term" value="C:nucleus"/>
    <property type="evidence" value="ECO:0007005"/>
    <property type="project" value="PomBase"/>
</dbReference>
<dbReference type="GO" id="GO:0030276">
    <property type="term" value="F:clathrin binding"/>
    <property type="evidence" value="ECO:0007669"/>
    <property type="project" value="InterPro"/>
</dbReference>
<dbReference type="GO" id="GO:0072583">
    <property type="term" value="P:clathrin-dependent endocytosis"/>
    <property type="evidence" value="ECO:0000305"/>
    <property type="project" value="PomBase"/>
</dbReference>
<dbReference type="GO" id="GO:0006886">
    <property type="term" value="P:intracellular protein transport"/>
    <property type="evidence" value="ECO:0000305"/>
    <property type="project" value="PomBase"/>
</dbReference>
<dbReference type="Gene3D" id="1.25.10.10">
    <property type="entry name" value="Leucine-rich Repeat Variant"/>
    <property type="match status" value="1"/>
</dbReference>
<dbReference type="InterPro" id="IPR026739">
    <property type="entry name" value="AP_beta"/>
</dbReference>
<dbReference type="InterPro" id="IPR016342">
    <property type="entry name" value="AP_complex_bsu_1_2_4"/>
</dbReference>
<dbReference type="InterPro" id="IPR011989">
    <property type="entry name" value="ARM-like"/>
</dbReference>
<dbReference type="InterPro" id="IPR016024">
    <property type="entry name" value="ARM-type_fold"/>
</dbReference>
<dbReference type="InterPro" id="IPR002553">
    <property type="entry name" value="Clathrin/coatomer_adapt-like_N"/>
</dbReference>
<dbReference type="PANTHER" id="PTHR11134">
    <property type="entry name" value="ADAPTOR COMPLEX SUBUNIT BETA FAMILY MEMBER"/>
    <property type="match status" value="1"/>
</dbReference>
<dbReference type="Pfam" id="PF01602">
    <property type="entry name" value="Adaptin_N"/>
    <property type="match status" value="1"/>
</dbReference>
<dbReference type="PIRSF" id="PIRSF002291">
    <property type="entry name" value="AP_complex_beta"/>
    <property type="match status" value="1"/>
</dbReference>
<dbReference type="SUPFAM" id="SSF48371">
    <property type="entry name" value="ARM repeat"/>
    <property type="match status" value="1"/>
</dbReference>
<accession>O43005</accession>
<protein>
    <recommendedName>
        <fullName>AP-2 complex subunit beta</fullName>
    </recommendedName>
    <alternativeName>
        <fullName>Beta-2-adaptin</fullName>
    </alternativeName>
    <alternativeName>
        <fullName>Beta-adaptin</fullName>
    </alternativeName>
    <alternativeName>
        <fullName>Clathrin assembly protein complex 2 beta large chain</fullName>
    </alternativeName>
    <alternativeName>
        <fullName>Clathrin assembly protein large beta chain</fullName>
    </alternativeName>
</protein>
<evidence type="ECO:0000250" key="1"/>
<evidence type="ECO:0000256" key="2">
    <source>
        <dbReference type="SAM" id="MobiDB-lite"/>
    </source>
</evidence>
<evidence type="ECO:0000305" key="3"/>
<keyword id="KW-1003">Cell membrane</keyword>
<keyword id="KW-0168">Coated pit</keyword>
<keyword id="KW-0254">Endocytosis</keyword>
<keyword id="KW-0472">Membrane</keyword>
<keyword id="KW-0653">Protein transport</keyword>
<keyword id="KW-1185">Reference proteome</keyword>
<keyword id="KW-0813">Transport</keyword>
<reference key="1">
    <citation type="journal article" date="2002" name="Nature">
        <title>The genome sequence of Schizosaccharomyces pombe.</title>
        <authorList>
            <person name="Wood V."/>
            <person name="Gwilliam R."/>
            <person name="Rajandream M.A."/>
            <person name="Lyne M.H."/>
            <person name="Lyne R."/>
            <person name="Stewart A."/>
            <person name="Sgouros J.G."/>
            <person name="Peat N."/>
            <person name="Hayles J."/>
            <person name="Baker S.G."/>
            <person name="Basham D."/>
            <person name="Bowman S."/>
            <person name="Brooks K."/>
            <person name="Brown D."/>
            <person name="Brown S."/>
            <person name="Chillingworth T."/>
            <person name="Churcher C.M."/>
            <person name="Collins M."/>
            <person name="Connor R."/>
            <person name="Cronin A."/>
            <person name="Davis P."/>
            <person name="Feltwell T."/>
            <person name="Fraser A."/>
            <person name="Gentles S."/>
            <person name="Goble A."/>
            <person name="Hamlin N."/>
            <person name="Harris D.E."/>
            <person name="Hidalgo J."/>
            <person name="Hodgson G."/>
            <person name="Holroyd S."/>
            <person name="Hornsby T."/>
            <person name="Howarth S."/>
            <person name="Huckle E.J."/>
            <person name="Hunt S."/>
            <person name="Jagels K."/>
            <person name="James K.D."/>
            <person name="Jones L."/>
            <person name="Jones M."/>
            <person name="Leather S."/>
            <person name="McDonald S."/>
            <person name="McLean J."/>
            <person name="Mooney P."/>
            <person name="Moule S."/>
            <person name="Mungall K.L."/>
            <person name="Murphy L.D."/>
            <person name="Niblett D."/>
            <person name="Odell C."/>
            <person name="Oliver K."/>
            <person name="O'Neil S."/>
            <person name="Pearson D."/>
            <person name="Quail M.A."/>
            <person name="Rabbinowitsch E."/>
            <person name="Rutherford K.M."/>
            <person name="Rutter S."/>
            <person name="Saunders D."/>
            <person name="Seeger K."/>
            <person name="Sharp S."/>
            <person name="Skelton J."/>
            <person name="Simmonds M.N."/>
            <person name="Squares R."/>
            <person name="Squares S."/>
            <person name="Stevens K."/>
            <person name="Taylor K."/>
            <person name="Taylor R.G."/>
            <person name="Tivey A."/>
            <person name="Walsh S.V."/>
            <person name="Warren T."/>
            <person name="Whitehead S."/>
            <person name="Woodward J.R."/>
            <person name="Volckaert G."/>
            <person name="Aert R."/>
            <person name="Robben J."/>
            <person name="Grymonprez B."/>
            <person name="Weltjens I."/>
            <person name="Vanstreels E."/>
            <person name="Rieger M."/>
            <person name="Schaefer M."/>
            <person name="Mueller-Auer S."/>
            <person name="Gabel C."/>
            <person name="Fuchs M."/>
            <person name="Duesterhoeft A."/>
            <person name="Fritzc C."/>
            <person name="Holzer E."/>
            <person name="Moestl D."/>
            <person name="Hilbert H."/>
            <person name="Borzym K."/>
            <person name="Langer I."/>
            <person name="Beck A."/>
            <person name="Lehrach H."/>
            <person name="Reinhardt R."/>
            <person name="Pohl T.M."/>
            <person name="Eger P."/>
            <person name="Zimmermann W."/>
            <person name="Wedler H."/>
            <person name="Wambutt R."/>
            <person name="Purnelle B."/>
            <person name="Goffeau A."/>
            <person name="Cadieu E."/>
            <person name="Dreano S."/>
            <person name="Gloux S."/>
            <person name="Lelaure V."/>
            <person name="Mottier S."/>
            <person name="Galibert F."/>
            <person name="Aves S.J."/>
            <person name="Xiang Z."/>
            <person name="Hunt C."/>
            <person name="Moore K."/>
            <person name="Hurst S.M."/>
            <person name="Lucas M."/>
            <person name="Rochet M."/>
            <person name="Gaillardin C."/>
            <person name="Tallada V.A."/>
            <person name="Garzon A."/>
            <person name="Thode G."/>
            <person name="Daga R.R."/>
            <person name="Cruzado L."/>
            <person name="Jimenez J."/>
            <person name="Sanchez M."/>
            <person name="del Rey F."/>
            <person name="Benito J."/>
            <person name="Dominguez A."/>
            <person name="Revuelta J.L."/>
            <person name="Moreno S."/>
            <person name="Armstrong J."/>
            <person name="Forsburg S.L."/>
            <person name="Cerutti L."/>
            <person name="Lowe T."/>
            <person name="McCombie W.R."/>
            <person name="Paulsen I."/>
            <person name="Potashkin J."/>
            <person name="Shpakovski G.V."/>
            <person name="Ussery D."/>
            <person name="Barrell B.G."/>
            <person name="Nurse P."/>
        </authorList>
    </citation>
    <scope>NUCLEOTIDE SEQUENCE [LARGE SCALE GENOMIC DNA]</scope>
    <source>
        <strain>972 / ATCC 24843</strain>
    </source>
</reference>
<gene>
    <name type="primary">apl1</name>
    <name type="ORF">SPBC2G2.06c</name>
</gene>